<name>VE5_MMPV1</name>
<reference key="1">
    <citation type="journal article" date="1991" name="Virology">
        <title>Characterization of the complete RhPV 1 genomic sequence and an integration locus from a metastatic tumor.</title>
        <authorList>
            <person name="Ostrow R.S."/>
            <person name="Labresh K.V."/>
            <person name="Faras A.J."/>
        </authorList>
    </citation>
    <scope>NUCLEOTIDE SEQUENCE [GENOMIC DNA]</scope>
</reference>
<dbReference type="EMBL" id="M60184">
    <property type="protein sequence ID" value="AAA79315.1"/>
    <property type="status" value="ALT_SEQ"/>
    <property type="molecule type" value="Genomic_DNA"/>
</dbReference>
<dbReference type="EMBL" id="M60184">
    <property type="protein sequence ID" value="AAA79316.1"/>
    <property type="status" value="ALT_SEQ"/>
    <property type="molecule type" value="Genomic_DNA"/>
</dbReference>
<dbReference type="PIR" id="F38503">
    <property type="entry name" value="W5WLR1"/>
</dbReference>
<dbReference type="SMR" id="P24834"/>
<dbReference type="KEGG" id="vg:1489010"/>
<dbReference type="KEGG" id="vg:1489011"/>
<dbReference type="Proteomes" id="UP000008169">
    <property type="component" value="Genome"/>
</dbReference>
<sequence>MVVCIGTQWSHFKPVHTLNSIQVLCKANCCCYACKPPPFCCFWLCFCCCFCLALCFVHLLSRCFCVFPVCLSVAAYAVVLGVHSEPVCSFWSVFVLFFNPVAFDTPACPQCGLQQNDVNTAHRHVIISYFAIVAVNIYFVLALLVGAAFKATSRART</sequence>
<protein>
    <recommendedName>
        <fullName>Probable protein E5</fullName>
    </recommendedName>
</protein>
<gene>
    <name type="primary">E5</name>
</gene>
<keyword id="KW-0244">Early protein</keyword>
<keyword id="KW-1185">Reference proteome</keyword>
<proteinExistence type="predicted"/>
<organismHost>
    <name type="scientific">Macaca mulatta</name>
    <name type="common">Rhesus macaque</name>
    <dbReference type="NCBI Taxonomy" id="9544"/>
</organismHost>
<feature type="chain" id="PRO_0000133305" description="Probable protein E5">
    <location>
        <begin position="1"/>
        <end position="157"/>
    </location>
</feature>
<organism>
    <name type="scientific">Macaca mulata papillomavirus 1</name>
    <name type="common">Rhpv 1</name>
    <name type="synonym">Rhesus papillomavirus type 1</name>
    <dbReference type="NCBI Taxonomy" id="2779844"/>
    <lineage>
        <taxon>Viruses</taxon>
        <taxon>Monodnaviria</taxon>
        <taxon>Shotokuvirae</taxon>
        <taxon>Cossaviricota</taxon>
        <taxon>Papovaviricetes</taxon>
        <taxon>Zurhausenvirales</taxon>
        <taxon>Papillomaviridae</taxon>
        <taxon>Firstpapillomavirinae</taxon>
        <taxon>Alphapapillomavirus</taxon>
        <taxon>Rhesus papillomavirus type 1</taxon>
    </lineage>
</organism>
<accession>P24834</accession>